<sequence length="213" mass="22923">MSDFRQDFIRFAVEEQVLRFGEFVTKAGRPSPYFFNAGLFNHGASLLSLARFYARSISESGIAFDMLFGPAYKGIVLAGATAMMLAEQGRDVPFAFNRKEAKDHGEGGTLIGAPLKGRVLIIDDVISAGTSVRESVEIIRANGAEPAGVAIALDRMERGQGELSATQEVAQKFGLPVVAIASLDDLLGFLAGSPDLADNLTRVEAYRTQYGVR</sequence>
<feature type="chain" id="PRO_1000164684" description="Orotate phosphoribosyltransferase">
    <location>
        <begin position="1"/>
        <end position="213"/>
    </location>
</feature>
<feature type="binding site" description="in other chain" evidence="1">
    <location>
        <position position="26"/>
    </location>
    <ligand>
        <name>5-phospho-alpha-D-ribose 1-diphosphate</name>
        <dbReference type="ChEBI" id="CHEBI:58017"/>
        <note>ligand shared between dimeric partners</note>
    </ligand>
</feature>
<feature type="binding site" evidence="1">
    <location>
        <begin position="34"/>
        <end position="35"/>
    </location>
    <ligand>
        <name>orotate</name>
        <dbReference type="ChEBI" id="CHEBI:30839"/>
    </ligand>
</feature>
<feature type="binding site" description="in other chain" evidence="1">
    <location>
        <begin position="72"/>
        <end position="73"/>
    </location>
    <ligand>
        <name>5-phospho-alpha-D-ribose 1-diphosphate</name>
        <dbReference type="ChEBI" id="CHEBI:58017"/>
        <note>ligand shared between dimeric partners</note>
    </ligand>
</feature>
<feature type="binding site" evidence="1">
    <location>
        <position position="98"/>
    </location>
    <ligand>
        <name>5-phospho-alpha-D-ribose 1-diphosphate</name>
        <dbReference type="ChEBI" id="CHEBI:58017"/>
        <note>ligand shared between dimeric partners</note>
    </ligand>
</feature>
<feature type="binding site" description="in other chain" evidence="1">
    <location>
        <position position="99"/>
    </location>
    <ligand>
        <name>5-phospho-alpha-D-ribose 1-diphosphate</name>
        <dbReference type="ChEBI" id="CHEBI:58017"/>
        <note>ligand shared between dimeric partners</note>
    </ligand>
</feature>
<feature type="binding site" evidence="1">
    <location>
        <position position="102"/>
    </location>
    <ligand>
        <name>5-phospho-alpha-D-ribose 1-diphosphate</name>
        <dbReference type="ChEBI" id="CHEBI:58017"/>
        <note>ligand shared between dimeric partners</note>
    </ligand>
</feature>
<feature type="binding site" evidence="1">
    <location>
        <position position="104"/>
    </location>
    <ligand>
        <name>5-phospho-alpha-D-ribose 1-diphosphate</name>
        <dbReference type="ChEBI" id="CHEBI:58017"/>
        <note>ligand shared between dimeric partners</note>
    </ligand>
</feature>
<feature type="binding site" description="in other chain" evidence="1">
    <location>
        <begin position="123"/>
        <end position="131"/>
    </location>
    <ligand>
        <name>5-phospho-alpha-D-ribose 1-diphosphate</name>
        <dbReference type="ChEBI" id="CHEBI:58017"/>
        <note>ligand shared between dimeric partners</note>
    </ligand>
</feature>
<feature type="binding site" evidence="1">
    <location>
        <position position="127"/>
    </location>
    <ligand>
        <name>orotate</name>
        <dbReference type="ChEBI" id="CHEBI:30839"/>
    </ligand>
</feature>
<feature type="binding site" evidence="1">
    <location>
        <position position="155"/>
    </location>
    <ligand>
        <name>orotate</name>
        <dbReference type="ChEBI" id="CHEBI:30839"/>
    </ligand>
</feature>
<comment type="function">
    <text evidence="1">Catalyzes the transfer of a ribosyl phosphate group from 5-phosphoribose 1-diphosphate to orotate, leading to the formation of orotidine monophosphate (OMP).</text>
</comment>
<comment type="catalytic activity">
    <reaction evidence="1">
        <text>orotidine 5'-phosphate + diphosphate = orotate + 5-phospho-alpha-D-ribose 1-diphosphate</text>
        <dbReference type="Rhea" id="RHEA:10380"/>
        <dbReference type="ChEBI" id="CHEBI:30839"/>
        <dbReference type="ChEBI" id="CHEBI:33019"/>
        <dbReference type="ChEBI" id="CHEBI:57538"/>
        <dbReference type="ChEBI" id="CHEBI:58017"/>
        <dbReference type="EC" id="2.4.2.10"/>
    </reaction>
</comment>
<comment type="cofactor">
    <cofactor evidence="1">
        <name>Mg(2+)</name>
        <dbReference type="ChEBI" id="CHEBI:18420"/>
    </cofactor>
</comment>
<comment type="pathway">
    <text evidence="1">Pyrimidine metabolism; UMP biosynthesis via de novo pathway; UMP from orotate: step 1/2.</text>
</comment>
<comment type="subunit">
    <text evidence="1">Homodimer.</text>
</comment>
<comment type="similarity">
    <text evidence="1">Belongs to the purine/pyrimidine phosphoribosyltransferase family. PyrE subfamily.</text>
</comment>
<reference key="1">
    <citation type="journal article" date="2009" name="PLoS Genet.">
        <title>The complete genome and proteome of Laribacter hongkongensis reveal potential mechanisms for adaptations to different temperatures and habitats.</title>
        <authorList>
            <person name="Woo P.C.Y."/>
            <person name="Lau S.K.P."/>
            <person name="Tse H."/>
            <person name="Teng J.L.L."/>
            <person name="Curreem S.O."/>
            <person name="Tsang A.K.L."/>
            <person name="Fan R.Y.Y."/>
            <person name="Wong G.K.M."/>
            <person name="Huang Y."/>
            <person name="Loman N.J."/>
            <person name="Snyder L.A.S."/>
            <person name="Cai J.J."/>
            <person name="Huang J.-D."/>
            <person name="Mak W."/>
            <person name="Pallen M.J."/>
            <person name="Lok S."/>
            <person name="Yuen K.-Y."/>
        </authorList>
    </citation>
    <scope>NUCLEOTIDE SEQUENCE [LARGE SCALE GENOMIC DNA]</scope>
    <source>
        <strain>HLHK9</strain>
    </source>
</reference>
<name>PYRE_LARHH</name>
<dbReference type="EC" id="2.4.2.10" evidence="1"/>
<dbReference type="EMBL" id="CP001154">
    <property type="protein sequence ID" value="ACO76190.1"/>
    <property type="molecule type" value="Genomic_DNA"/>
</dbReference>
<dbReference type="RefSeq" id="WP_012698653.1">
    <property type="nucleotide sequence ID" value="NC_012559.1"/>
</dbReference>
<dbReference type="SMR" id="C1D6F5"/>
<dbReference type="STRING" id="557598.LHK_03212"/>
<dbReference type="GeneID" id="75108394"/>
<dbReference type="KEGG" id="lhk:LHK_03212"/>
<dbReference type="eggNOG" id="COG0461">
    <property type="taxonomic scope" value="Bacteria"/>
</dbReference>
<dbReference type="HOGENOM" id="CLU_074878_0_1_4"/>
<dbReference type="UniPathway" id="UPA00070">
    <property type="reaction ID" value="UER00119"/>
</dbReference>
<dbReference type="Proteomes" id="UP000002010">
    <property type="component" value="Chromosome"/>
</dbReference>
<dbReference type="GO" id="GO:0005737">
    <property type="term" value="C:cytoplasm"/>
    <property type="evidence" value="ECO:0007669"/>
    <property type="project" value="TreeGrafter"/>
</dbReference>
<dbReference type="GO" id="GO:0000287">
    <property type="term" value="F:magnesium ion binding"/>
    <property type="evidence" value="ECO:0007669"/>
    <property type="project" value="UniProtKB-UniRule"/>
</dbReference>
<dbReference type="GO" id="GO:0004588">
    <property type="term" value="F:orotate phosphoribosyltransferase activity"/>
    <property type="evidence" value="ECO:0007669"/>
    <property type="project" value="UniProtKB-UniRule"/>
</dbReference>
<dbReference type="GO" id="GO:0006207">
    <property type="term" value="P:'de novo' pyrimidine nucleobase biosynthetic process"/>
    <property type="evidence" value="ECO:0007669"/>
    <property type="project" value="TreeGrafter"/>
</dbReference>
<dbReference type="GO" id="GO:0044205">
    <property type="term" value="P:'de novo' UMP biosynthetic process"/>
    <property type="evidence" value="ECO:0007669"/>
    <property type="project" value="UniProtKB-UniRule"/>
</dbReference>
<dbReference type="GO" id="GO:0046132">
    <property type="term" value="P:pyrimidine ribonucleoside biosynthetic process"/>
    <property type="evidence" value="ECO:0007669"/>
    <property type="project" value="TreeGrafter"/>
</dbReference>
<dbReference type="CDD" id="cd06223">
    <property type="entry name" value="PRTases_typeI"/>
    <property type="match status" value="1"/>
</dbReference>
<dbReference type="FunFam" id="3.40.50.2020:FF:000008">
    <property type="entry name" value="Orotate phosphoribosyltransferase"/>
    <property type="match status" value="1"/>
</dbReference>
<dbReference type="Gene3D" id="3.40.50.2020">
    <property type="match status" value="1"/>
</dbReference>
<dbReference type="HAMAP" id="MF_01208">
    <property type="entry name" value="PyrE"/>
    <property type="match status" value="1"/>
</dbReference>
<dbReference type="InterPro" id="IPR023031">
    <property type="entry name" value="OPRT"/>
</dbReference>
<dbReference type="InterPro" id="IPR004467">
    <property type="entry name" value="Or_phspho_trans_dom"/>
</dbReference>
<dbReference type="InterPro" id="IPR000836">
    <property type="entry name" value="PRibTrfase_dom"/>
</dbReference>
<dbReference type="InterPro" id="IPR029057">
    <property type="entry name" value="PRTase-like"/>
</dbReference>
<dbReference type="NCBIfam" id="TIGR00336">
    <property type="entry name" value="pyrE"/>
    <property type="match status" value="1"/>
</dbReference>
<dbReference type="PANTHER" id="PTHR46683">
    <property type="entry name" value="OROTATE PHOSPHORIBOSYLTRANSFERASE 1-RELATED"/>
    <property type="match status" value="1"/>
</dbReference>
<dbReference type="PANTHER" id="PTHR46683:SF1">
    <property type="entry name" value="OROTATE PHOSPHORIBOSYLTRANSFERASE 1-RELATED"/>
    <property type="match status" value="1"/>
</dbReference>
<dbReference type="Pfam" id="PF00156">
    <property type="entry name" value="Pribosyltran"/>
    <property type="match status" value="1"/>
</dbReference>
<dbReference type="SUPFAM" id="SSF53271">
    <property type="entry name" value="PRTase-like"/>
    <property type="match status" value="1"/>
</dbReference>
<dbReference type="PROSITE" id="PS00103">
    <property type="entry name" value="PUR_PYR_PR_TRANSFER"/>
    <property type="match status" value="1"/>
</dbReference>
<protein>
    <recommendedName>
        <fullName evidence="1">Orotate phosphoribosyltransferase</fullName>
        <shortName evidence="1">OPRT</shortName>
        <shortName evidence="1">OPRTase</shortName>
        <ecNumber evidence="1">2.4.2.10</ecNumber>
    </recommendedName>
</protein>
<proteinExistence type="inferred from homology"/>
<gene>
    <name evidence="1" type="primary">pyrE</name>
    <name type="ordered locus">LHK_03212</name>
</gene>
<organism>
    <name type="scientific">Laribacter hongkongensis (strain HLHK9)</name>
    <dbReference type="NCBI Taxonomy" id="557598"/>
    <lineage>
        <taxon>Bacteria</taxon>
        <taxon>Pseudomonadati</taxon>
        <taxon>Pseudomonadota</taxon>
        <taxon>Betaproteobacteria</taxon>
        <taxon>Neisseriales</taxon>
        <taxon>Aquaspirillaceae</taxon>
        <taxon>Laribacter</taxon>
    </lineage>
</organism>
<keyword id="KW-0328">Glycosyltransferase</keyword>
<keyword id="KW-0460">Magnesium</keyword>
<keyword id="KW-0665">Pyrimidine biosynthesis</keyword>
<keyword id="KW-1185">Reference proteome</keyword>
<keyword id="KW-0808">Transferase</keyword>
<accession>C1D6F5</accession>
<evidence type="ECO:0000255" key="1">
    <source>
        <dbReference type="HAMAP-Rule" id="MF_01208"/>
    </source>
</evidence>